<comment type="function">
    <text evidence="1">Activates ribosomal RNA transcription. Plays a direct role in upstream activation of rRNA promoters.</text>
</comment>
<comment type="subunit">
    <text evidence="1">Homodimer.</text>
</comment>
<comment type="similarity">
    <text evidence="1">Belongs to the transcriptional regulatory Fis family.</text>
</comment>
<reference key="1">
    <citation type="journal article" date="2004" name="Proc. Natl. Acad. Sci. U.S.A.">
        <title>Insights into the evolution of Yersinia pestis through whole-genome comparison with Yersinia pseudotuberculosis.</title>
        <authorList>
            <person name="Chain P.S.G."/>
            <person name="Carniel E."/>
            <person name="Larimer F.W."/>
            <person name="Lamerdin J."/>
            <person name="Stoutland P.O."/>
            <person name="Regala W.M."/>
            <person name="Georgescu A.M."/>
            <person name="Vergez L.M."/>
            <person name="Land M.L."/>
            <person name="Motin V.L."/>
            <person name="Brubaker R.R."/>
            <person name="Fowler J."/>
            <person name="Hinnebusch J."/>
            <person name="Marceau M."/>
            <person name="Medigue C."/>
            <person name="Simonet M."/>
            <person name="Chenal-Francisque V."/>
            <person name="Souza B."/>
            <person name="Dacheux D."/>
            <person name="Elliott J.M."/>
            <person name="Derbise A."/>
            <person name="Hauser L.J."/>
            <person name="Garcia E."/>
        </authorList>
    </citation>
    <scope>NUCLEOTIDE SEQUENCE [LARGE SCALE GENOMIC DNA]</scope>
    <source>
        <strain>IP32953</strain>
    </source>
</reference>
<evidence type="ECO:0000255" key="1">
    <source>
        <dbReference type="HAMAP-Rule" id="MF_00166"/>
    </source>
</evidence>
<proteinExistence type="inferred from homology"/>
<keyword id="KW-0010">Activator</keyword>
<keyword id="KW-0238">DNA-binding</keyword>
<keyword id="KW-0804">Transcription</keyword>
<keyword id="KW-0805">Transcription regulation</keyword>
<protein>
    <recommendedName>
        <fullName evidence="1">DNA-binding protein Fis</fullName>
    </recommendedName>
</protein>
<gene>
    <name evidence="1" type="primary">fis</name>
    <name type="ordered locus">YPTB3577</name>
</gene>
<organism>
    <name type="scientific">Yersinia pseudotuberculosis serotype I (strain IP32953)</name>
    <dbReference type="NCBI Taxonomy" id="273123"/>
    <lineage>
        <taxon>Bacteria</taxon>
        <taxon>Pseudomonadati</taxon>
        <taxon>Pseudomonadota</taxon>
        <taxon>Gammaproteobacteria</taxon>
        <taxon>Enterobacterales</taxon>
        <taxon>Yersiniaceae</taxon>
        <taxon>Yersinia</taxon>
    </lineage>
</organism>
<sequence>MFEQRVNSDVLTVATVNSQDQVTQKPLRDSVKQALKNYFAQLNGQDVSDLYELVLAEVEQPLLDMVMQYTRGNQTRAALMMGINRGTLRKKLKKYGMN</sequence>
<name>FIS_YERPS</name>
<dbReference type="EMBL" id="BX936398">
    <property type="protein sequence ID" value="CAH22815.1"/>
    <property type="molecule type" value="Genomic_DNA"/>
</dbReference>
<dbReference type="RefSeq" id="WP_002210061.1">
    <property type="nucleotide sequence ID" value="NZ_CP009712.1"/>
</dbReference>
<dbReference type="SMR" id="Q665E1"/>
<dbReference type="GeneID" id="97454355"/>
<dbReference type="KEGG" id="ypo:BZ17_3023"/>
<dbReference type="KEGG" id="yps:YPTB3577"/>
<dbReference type="PATRIC" id="fig|273123.14.peg.3165"/>
<dbReference type="Proteomes" id="UP000001011">
    <property type="component" value="Chromosome"/>
</dbReference>
<dbReference type="GO" id="GO:0003700">
    <property type="term" value="F:DNA-binding transcription factor activity"/>
    <property type="evidence" value="ECO:0007669"/>
    <property type="project" value="UniProtKB-UniRule"/>
</dbReference>
<dbReference type="GO" id="GO:0043565">
    <property type="term" value="F:sequence-specific DNA binding"/>
    <property type="evidence" value="ECO:0007669"/>
    <property type="project" value="InterPro"/>
</dbReference>
<dbReference type="FunFam" id="1.10.10.60:FF:000006">
    <property type="entry name" value="DNA-binding protein Fis"/>
    <property type="match status" value="1"/>
</dbReference>
<dbReference type="Gene3D" id="1.10.10.60">
    <property type="entry name" value="Homeodomain-like"/>
    <property type="match status" value="1"/>
</dbReference>
<dbReference type="HAMAP" id="MF_00166">
    <property type="entry name" value="DNA_binding_Fis"/>
    <property type="match status" value="1"/>
</dbReference>
<dbReference type="InterPro" id="IPR005412">
    <property type="entry name" value="Fis_DNA-bd"/>
</dbReference>
<dbReference type="InterPro" id="IPR009057">
    <property type="entry name" value="Homeodomain-like_sf"/>
</dbReference>
<dbReference type="InterPro" id="IPR002197">
    <property type="entry name" value="HTH_Fis"/>
</dbReference>
<dbReference type="InterPro" id="IPR050207">
    <property type="entry name" value="Trans_regulatory_Fis"/>
</dbReference>
<dbReference type="NCBIfam" id="NF001659">
    <property type="entry name" value="PRK00430.1"/>
    <property type="match status" value="1"/>
</dbReference>
<dbReference type="PANTHER" id="PTHR47918">
    <property type="entry name" value="DNA-BINDING PROTEIN FIS"/>
    <property type="match status" value="1"/>
</dbReference>
<dbReference type="PANTHER" id="PTHR47918:SF1">
    <property type="entry name" value="DNA-BINDING PROTEIN FIS"/>
    <property type="match status" value="1"/>
</dbReference>
<dbReference type="Pfam" id="PF02954">
    <property type="entry name" value="HTH_8"/>
    <property type="match status" value="1"/>
</dbReference>
<dbReference type="PIRSF" id="PIRSF002097">
    <property type="entry name" value="DNA-binding_Fis"/>
    <property type="match status" value="1"/>
</dbReference>
<dbReference type="PRINTS" id="PR01591">
    <property type="entry name" value="DNABINDNGFIS"/>
</dbReference>
<dbReference type="PRINTS" id="PR01590">
    <property type="entry name" value="HTHFIS"/>
</dbReference>
<dbReference type="SUPFAM" id="SSF46689">
    <property type="entry name" value="Homeodomain-like"/>
    <property type="match status" value="1"/>
</dbReference>
<feature type="chain" id="PRO_0000203904" description="DNA-binding protein Fis">
    <location>
        <begin position="1"/>
        <end position="98"/>
    </location>
</feature>
<feature type="DNA-binding region" description="H-T-H motif" evidence="1">
    <location>
        <begin position="74"/>
        <end position="93"/>
    </location>
</feature>
<accession>Q665E1</accession>